<keyword id="KW-0028">Amino-acid biosynthesis</keyword>
<keyword id="KW-0963">Cytoplasm</keyword>
<keyword id="KW-0223">Dioxygenase</keyword>
<keyword id="KW-0408">Iron</keyword>
<keyword id="KW-0479">Metal-binding</keyword>
<keyword id="KW-0486">Methionine biosynthesis</keyword>
<keyword id="KW-0533">Nickel</keyword>
<keyword id="KW-0539">Nucleus</keyword>
<keyword id="KW-0560">Oxidoreductase</keyword>
<keyword id="KW-1185">Reference proteome</keyword>
<name>MTND_DROPS</name>
<comment type="function">
    <text evidence="1">Catalyzes 2 different reactions between oxygen and the acireductone 1,2-dihydroxy-3-keto-5-methylthiopentene (DHK-MTPene) depending upon the metal bound in the active site. Fe-containing acireductone dioxygenase (Fe-ARD) produces formate and 2-keto-4-methylthiobutyrate (KMTB), the alpha-ketoacid precursor of methionine in the methionine recycle pathway. Ni-containing acireductone dioxygenase (Ni-ARD) produces methylthiopropionate, carbon monoxide and formate, and does not lie on the methionine recycle pathway.</text>
</comment>
<comment type="catalytic activity">
    <reaction evidence="1">
        <text>1,2-dihydroxy-5-(methylsulfanyl)pent-1-en-3-one + O2 = 4-methylsulfanyl-2-oxobutanoate + formate + 2 H(+)</text>
        <dbReference type="Rhea" id="RHEA:24504"/>
        <dbReference type="ChEBI" id="CHEBI:15378"/>
        <dbReference type="ChEBI" id="CHEBI:15379"/>
        <dbReference type="ChEBI" id="CHEBI:15740"/>
        <dbReference type="ChEBI" id="CHEBI:16723"/>
        <dbReference type="ChEBI" id="CHEBI:49252"/>
        <dbReference type="EC" id="1.13.11.54"/>
    </reaction>
</comment>
<comment type="catalytic activity">
    <reaction evidence="1">
        <text>1,2-dihydroxy-5-(methylsulfanyl)pent-1-en-3-one + O2 = 3-(methylsulfanyl)propanoate + CO + formate + 2 H(+)</text>
        <dbReference type="Rhea" id="RHEA:14161"/>
        <dbReference type="ChEBI" id="CHEBI:15378"/>
        <dbReference type="ChEBI" id="CHEBI:15379"/>
        <dbReference type="ChEBI" id="CHEBI:15740"/>
        <dbReference type="ChEBI" id="CHEBI:17245"/>
        <dbReference type="ChEBI" id="CHEBI:49016"/>
        <dbReference type="ChEBI" id="CHEBI:49252"/>
        <dbReference type="EC" id="1.13.11.53"/>
    </reaction>
</comment>
<comment type="cofactor">
    <cofactor evidence="1">
        <name>Fe(2+)</name>
        <dbReference type="ChEBI" id="CHEBI:29033"/>
    </cofactor>
    <cofactor evidence="1">
        <name>Ni(2+)</name>
        <dbReference type="ChEBI" id="CHEBI:49786"/>
    </cofactor>
    <text evidence="1">Binds either 1 Fe or Ni cation per monomer. Iron-binding promotes an acireductone dioxygenase reaction producing 2-keto-4-methylthiobutyrate, while nickel-binding promotes an acireductone dioxygenase reaction producing 3-(methylsulfanyl)propanoate.</text>
</comment>
<comment type="pathway">
    <text evidence="1">Amino-acid biosynthesis; L-methionine biosynthesis via salvage pathway; L-methionine from S-methyl-5-thio-alpha-D-ribose 1-phosphate: step 5/6.</text>
</comment>
<comment type="subcellular location">
    <subcellularLocation>
        <location evidence="1">Cytoplasm</location>
    </subcellularLocation>
    <subcellularLocation>
        <location evidence="1">Nucleus</location>
    </subcellularLocation>
</comment>
<comment type="similarity">
    <text evidence="1">Belongs to the acireductone dioxygenase (ARD) family.</text>
</comment>
<proteinExistence type="inferred from homology"/>
<protein>
    <recommendedName>
        <fullName evidence="1">Acireductone dioxygenase</fullName>
    </recommendedName>
    <alternativeName>
        <fullName evidence="1">Acireductone dioxygenase (Fe(2+)-requiring)</fullName>
        <shortName evidence="1">ARD'</shortName>
        <shortName evidence="1">Fe-ARD</shortName>
        <ecNumber evidence="1">1.13.11.54</ecNumber>
    </alternativeName>
    <alternativeName>
        <fullName evidence="1">Acireductone dioxygenase (Ni(2+)-requiring)</fullName>
        <shortName evidence="1">ARD</shortName>
        <shortName evidence="1">Ni-ARD</shortName>
        <ecNumber evidence="1">1.13.11.53</ecNumber>
    </alternativeName>
</protein>
<gene>
    <name type="ORF">GA16655</name>
</gene>
<evidence type="ECO:0000255" key="1">
    <source>
        <dbReference type="HAMAP-Rule" id="MF_03154"/>
    </source>
</evidence>
<accession>Q2LZI9</accession>
<organism>
    <name type="scientific">Drosophila pseudoobscura pseudoobscura</name>
    <name type="common">Fruit fly</name>
    <dbReference type="NCBI Taxonomy" id="46245"/>
    <lineage>
        <taxon>Eukaryota</taxon>
        <taxon>Metazoa</taxon>
        <taxon>Ecdysozoa</taxon>
        <taxon>Arthropoda</taxon>
        <taxon>Hexapoda</taxon>
        <taxon>Insecta</taxon>
        <taxon>Pterygota</taxon>
        <taxon>Neoptera</taxon>
        <taxon>Endopterygota</taxon>
        <taxon>Diptera</taxon>
        <taxon>Brachycera</taxon>
        <taxon>Muscomorpha</taxon>
        <taxon>Ephydroidea</taxon>
        <taxon>Drosophilidae</taxon>
        <taxon>Drosophila</taxon>
        <taxon>Sophophora</taxon>
    </lineage>
</organism>
<dbReference type="EC" id="1.13.11.54" evidence="1"/>
<dbReference type="EC" id="1.13.11.53" evidence="1"/>
<dbReference type="EMBL" id="CH379069">
    <property type="protein sequence ID" value="EAL29518.2"/>
    <property type="molecule type" value="Genomic_DNA"/>
</dbReference>
<dbReference type="SMR" id="Q2LZI9"/>
<dbReference type="FunCoup" id="Q2LZI9">
    <property type="interactions" value="421"/>
</dbReference>
<dbReference type="STRING" id="46245.Q2LZI9"/>
<dbReference type="EnsemblMetazoa" id="FBtr0276873">
    <property type="protein sequence ID" value="FBpp0275311"/>
    <property type="gene ID" value="FBgn0076670"/>
</dbReference>
<dbReference type="KEGG" id="dpo:4812932"/>
<dbReference type="CTD" id="55256"/>
<dbReference type="eggNOG" id="KOG2107">
    <property type="taxonomic scope" value="Eukaryota"/>
</dbReference>
<dbReference type="HOGENOM" id="CLU_090154_0_1_1"/>
<dbReference type="InParanoid" id="Q2LZI9"/>
<dbReference type="OMA" id="WYMDESQ"/>
<dbReference type="UniPathway" id="UPA00904">
    <property type="reaction ID" value="UER00878"/>
</dbReference>
<dbReference type="Proteomes" id="UP000001819">
    <property type="component" value="Chromosome X"/>
</dbReference>
<dbReference type="Bgee" id="FBgn0076670">
    <property type="expression patterns" value="Expressed in female reproductive system and 2 other cell types or tissues"/>
</dbReference>
<dbReference type="GO" id="GO:0005737">
    <property type="term" value="C:cytoplasm"/>
    <property type="evidence" value="ECO:0007669"/>
    <property type="project" value="UniProtKB-SubCell"/>
</dbReference>
<dbReference type="GO" id="GO:0005634">
    <property type="term" value="C:nucleus"/>
    <property type="evidence" value="ECO:0007669"/>
    <property type="project" value="UniProtKB-SubCell"/>
</dbReference>
<dbReference type="GO" id="GO:0010308">
    <property type="term" value="F:acireductone dioxygenase (Ni2+-requiring) activity"/>
    <property type="evidence" value="ECO:0007669"/>
    <property type="project" value="UniProtKB-UniRule"/>
</dbReference>
<dbReference type="GO" id="GO:0010309">
    <property type="term" value="F:acireductone dioxygenase [iron(II)-requiring] activity"/>
    <property type="evidence" value="ECO:0007669"/>
    <property type="project" value="UniProtKB-UniRule"/>
</dbReference>
<dbReference type="GO" id="GO:0005506">
    <property type="term" value="F:iron ion binding"/>
    <property type="evidence" value="ECO:0007669"/>
    <property type="project" value="UniProtKB-UniRule"/>
</dbReference>
<dbReference type="GO" id="GO:0016151">
    <property type="term" value="F:nickel cation binding"/>
    <property type="evidence" value="ECO:0007669"/>
    <property type="project" value="UniProtKB-UniRule"/>
</dbReference>
<dbReference type="GO" id="GO:0019509">
    <property type="term" value="P:L-methionine salvage from methylthioadenosine"/>
    <property type="evidence" value="ECO:0007669"/>
    <property type="project" value="UniProtKB-UniRule"/>
</dbReference>
<dbReference type="CDD" id="cd02232">
    <property type="entry name" value="cupin_ARD"/>
    <property type="match status" value="1"/>
</dbReference>
<dbReference type="FunFam" id="2.60.120.10:FF:000031">
    <property type="entry name" value="1,2-dihydroxy-3-keto-5-methylthiopentene dioxygenase"/>
    <property type="match status" value="1"/>
</dbReference>
<dbReference type="Gene3D" id="2.60.120.10">
    <property type="entry name" value="Jelly Rolls"/>
    <property type="match status" value="1"/>
</dbReference>
<dbReference type="HAMAP" id="MF_03154">
    <property type="entry name" value="Salvage_MtnD_euk"/>
    <property type="match status" value="1"/>
</dbReference>
<dbReference type="InterPro" id="IPR004313">
    <property type="entry name" value="ARD"/>
</dbReference>
<dbReference type="InterPro" id="IPR027496">
    <property type="entry name" value="ARD_euk"/>
</dbReference>
<dbReference type="InterPro" id="IPR014710">
    <property type="entry name" value="RmlC-like_jellyroll"/>
</dbReference>
<dbReference type="InterPro" id="IPR011051">
    <property type="entry name" value="RmlC_Cupin_sf"/>
</dbReference>
<dbReference type="PANTHER" id="PTHR23418">
    <property type="entry name" value="ACIREDUCTONE DIOXYGENASE"/>
    <property type="match status" value="1"/>
</dbReference>
<dbReference type="PANTHER" id="PTHR23418:SF0">
    <property type="entry name" value="ACIREDUCTONE DIOXYGENASE"/>
    <property type="match status" value="1"/>
</dbReference>
<dbReference type="Pfam" id="PF03079">
    <property type="entry name" value="ARD"/>
    <property type="match status" value="1"/>
</dbReference>
<dbReference type="SUPFAM" id="SSF51182">
    <property type="entry name" value="RmlC-like cupins"/>
    <property type="match status" value="1"/>
</dbReference>
<reference key="1">
    <citation type="journal article" date="2005" name="Genome Res.">
        <title>Comparative genome sequencing of Drosophila pseudoobscura: chromosomal, gene, and cis-element evolution.</title>
        <authorList>
            <person name="Richards S."/>
            <person name="Liu Y."/>
            <person name="Bettencourt B.R."/>
            <person name="Hradecky P."/>
            <person name="Letovsky S."/>
            <person name="Nielsen R."/>
            <person name="Thornton K."/>
            <person name="Hubisz M.J."/>
            <person name="Chen R."/>
            <person name="Meisel R.P."/>
            <person name="Couronne O."/>
            <person name="Hua S."/>
            <person name="Smith M.A."/>
            <person name="Zhang P."/>
            <person name="Liu J."/>
            <person name="Bussemaker H.J."/>
            <person name="van Batenburg M.F."/>
            <person name="Howells S.L."/>
            <person name="Scherer S.E."/>
            <person name="Sodergren E."/>
            <person name="Matthews B.B."/>
            <person name="Crosby M.A."/>
            <person name="Schroeder A.J."/>
            <person name="Ortiz-Barrientos D."/>
            <person name="Rives C.M."/>
            <person name="Metzker M.L."/>
            <person name="Muzny D.M."/>
            <person name="Scott G."/>
            <person name="Steffen D."/>
            <person name="Wheeler D.A."/>
            <person name="Worley K.C."/>
            <person name="Havlak P."/>
            <person name="Durbin K.J."/>
            <person name="Egan A."/>
            <person name="Gill R."/>
            <person name="Hume J."/>
            <person name="Morgan M.B."/>
            <person name="Miner G."/>
            <person name="Hamilton C."/>
            <person name="Huang Y."/>
            <person name="Waldron L."/>
            <person name="Verduzco D."/>
            <person name="Clerc-Blankenburg K.P."/>
            <person name="Dubchak I."/>
            <person name="Noor M.A.F."/>
            <person name="Anderson W."/>
            <person name="White K.P."/>
            <person name="Clark A.G."/>
            <person name="Schaeffer S.W."/>
            <person name="Gelbart W.M."/>
            <person name="Weinstock G.M."/>
            <person name="Gibbs R.A."/>
        </authorList>
    </citation>
    <scope>NUCLEOTIDE SEQUENCE [LARGE SCALE GENOMIC DNA]</scope>
    <source>
        <strain>MV2-25 / Tucson 14011-0121.94</strain>
    </source>
</reference>
<sequence length="187" mass="22224">MVKVWFMDDEQETDQRLEHHRSPPDYLELPELYQKTGVEYFKINADDYQNDAILGELRAKRGYTYDDEITCSEKCLPDYANKLKNFFTEHLHTDEEIRLVLDGSGYFDVRDNEEQWLRIQVVKGDLIIIPAGIYHRFTLDSNNFIKARRYFVGEPVWTPHNRPADDLDCRKSYLKHQAESFVQLNQV</sequence>
<feature type="chain" id="PRO_0000414332" description="Acireductone dioxygenase">
    <location>
        <begin position="1"/>
        <end position="187"/>
    </location>
</feature>
<feature type="binding site" evidence="1">
    <location>
        <position position="90"/>
    </location>
    <ligand>
        <name>Fe(2+)</name>
        <dbReference type="ChEBI" id="CHEBI:29033"/>
        <note>for iron-dependent acireductone dioxygenase activity</note>
    </ligand>
</feature>
<feature type="binding site" evidence="1">
    <location>
        <position position="90"/>
    </location>
    <ligand>
        <name>Ni(2+)</name>
        <dbReference type="ChEBI" id="CHEBI:49786"/>
        <note>for nickel-dependent acireductone dioxygenase activity</note>
    </ligand>
</feature>
<feature type="binding site" evidence="1">
    <location>
        <position position="92"/>
    </location>
    <ligand>
        <name>Fe(2+)</name>
        <dbReference type="ChEBI" id="CHEBI:29033"/>
        <note>for iron-dependent acireductone dioxygenase activity</note>
    </ligand>
</feature>
<feature type="binding site" evidence="1">
    <location>
        <position position="92"/>
    </location>
    <ligand>
        <name>Ni(2+)</name>
        <dbReference type="ChEBI" id="CHEBI:49786"/>
        <note>for nickel-dependent acireductone dioxygenase activity</note>
    </ligand>
</feature>
<feature type="binding site" evidence="1">
    <location>
        <position position="96"/>
    </location>
    <ligand>
        <name>Fe(2+)</name>
        <dbReference type="ChEBI" id="CHEBI:29033"/>
        <note>for iron-dependent acireductone dioxygenase activity</note>
    </ligand>
</feature>
<feature type="binding site" evidence="1">
    <location>
        <position position="96"/>
    </location>
    <ligand>
        <name>Ni(2+)</name>
        <dbReference type="ChEBI" id="CHEBI:49786"/>
        <note>for nickel-dependent acireductone dioxygenase activity</note>
    </ligand>
</feature>
<feature type="binding site" evidence="1">
    <location>
        <position position="135"/>
    </location>
    <ligand>
        <name>Fe(2+)</name>
        <dbReference type="ChEBI" id="CHEBI:29033"/>
        <note>for iron-dependent acireductone dioxygenase activity</note>
    </ligand>
</feature>
<feature type="binding site" evidence="1">
    <location>
        <position position="135"/>
    </location>
    <ligand>
        <name>Ni(2+)</name>
        <dbReference type="ChEBI" id="CHEBI:49786"/>
        <note>for nickel-dependent acireductone dioxygenase activity</note>
    </ligand>
</feature>